<proteinExistence type="inferred from homology"/>
<feature type="chain" id="PRO_0000109286" description="Fatty acid oxidation complex subunit alpha">
    <location>
        <begin position="1"/>
        <end position="729"/>
    </location>
</feature>
<feature type="region of interest" description="Enoyl-CoA hydratase/isomerase" evidence="1">
    <location>
        <begin position="1"/>
        <end position="189"/>
    </location>
</feature>
<feature type="region of interest" description="3-hydroxyacyl-CoA dehydrogenase" evidence="1">
    <location>
        <begin position="311"/>
        <end position="729"/>
    </location>
</feature>
<feature type="region of interest" description="Disordered" evidence="2">
    <location>
        <begin position="707"/>
        <end position="729"/>
    </location>
</feature>
<feature type="active site" description="For 3-hydroxyacyl-CoA dehydrogenase activity" evidence="1">
    <location>
        <position position="450"/>
    </location>
</feature>
<feature type="binding site" evidence="1">
    <location>
        <position position="296"/>
    </location>
    <ligand>
        <name>substrate</name>
    </ligand>
</feature>
<feature type="binding site" evidence="1">
    <location>
        <position position="324"/>
    </location>
    <ligand>
        <name>NAD(+)</name>
        <dbReference type="ChEBI" id="CHEBI:57540"/>
    </ligand>
</feature>
<feature type="binding site" evidence="1">
    <location>
        <position position="343"/>
    </location>
    <ligand>
        <name>NAD(+)</name>
        <dbReference type="ChEBI" id="CHEBI:57540"/>
    </ligand>
</feature>
<feature type="binding site" evidence="1">
    <location>
        <begin position="400"/>
        <end position="402"/>
    </location>
    <ligand>
        <name>NAD(+)</name>
        <dbReference type="ChEBI" id="CHEBI:57540"/>
    </ligand>
</feature>
<feature type="binding site" evidence="1">
    <location>
        <position position="407"/>
    </location>
    <ligand>
        <name>NAD(+)</name>
        <dbReference type="ChEBI" id="CHEBI:57540"/>
    </ligand>
</feature>
<feature type="binding site" evidence="1">
    <location>
        <position position="429"/>
    </location>
    <ligand>
        <name>NAD(+)</name>
        <dbReference type="ChEBI" id="CHEBI:57540"/>
    </ligand>
</feature>
<feature type="binding site" evidence="1">
    <location>
        <position position="453"/>
    </location>
    <ligand>
        <name>NAD(+)</name>
        <dbReference type="ChEBI" id="CHEBI:57540"/>
    </ligand>
</feature>
<feature type="binding site" evidence="1">
    <location>
        <position position="500"/>
    </location>
    <ligand>
        <name>substrate</name>
    </ligand>
</feature>
<feature type="binding site" evidence="1">
    <location>
        <position position="660"/>
    </location>
    <ligand>
        <name>substrate</name>
    </ligand>
</feature>
<feature type="site" description="Important for catalytic activity" evidence="1">
    <location>
        <position position="119"/>
    </location>
</feature>
<feature type="site" description="Important for catalytic activity" evidence="1">
    <location>
        <position position="139"/>
    </location>
</feature>
<accession>Q8Z3C6</accession>
<dbReference type="EC" id="4.2.1.17" evidence="1"/>
<dbReference type="EC" id="5.1.2.3" evidence="1"/>
<dbReference type="EC" id="5.3.3.8" evidence="1"/>
<dbReference type="EC" id="1.1.1.35" evidence="1"/>
<dbReference type="EMBL" id="AL513382">
    <property type="protein sequence ID" value="CAD07910.1"/>
    <property type="molecule type" value="Genomic_DNA"/>
</dbReference>
<dbReference type="EMBL" id="AE014613">
    <property type="protein sequence ID" value="AAO70843.1"/>
    <property type="molecule type" value="Genomic_DNA"/>
</dbReference>
<dbReference type="RefSeq" id="NP_457769.1">
    <property type="nucleotide sequence ID" value="NC_003198.1"/>
</dbReference>
<dbReference type="RefSeq" id="WP_000966004.1">
    <property type="nucleotide sequence ID" value="NZ_WSUR01000033.1"/>
</dbReference>
<dbReference type="SMR" id="Q8Z3C6"/>
<dbReference type="STRING" id="220341.gene:17587429"/>
<dbReference type="KEGG" id="stt:t3315"/>
<dbReference type="KEGG" id="sty:STY3577"/>
<dbReference type="PATRIC" id="fig|220341.7.peg.3644"/>
<dbReference type="eggNOG" id="COG1024">
    <property type="taxonomic scope" value="Bacteria"/>
</dbReference>
<dbReference type="eggNOG" id="COG1250">
    <property type="taxonomic scope" value="Bacteria"/>
</dbReference>
<dbReference type="HOGENOM" id="CLU_009834_16_3_6"/>
<dbReference type="OMA" id="YNGAAMG"/>
<dbReference type="OrthoDB" id="5389341at2"/>
<dbReference type="UniPathway" id="UPA00659"/>
<dbReference type="Proteomes" id="UP000000541">
    <property type="component" value="Chromosome"/>
</dbReference>
<dbReference type="Proteomes" id="UP000002670">
    <property type="component" value="Chromosome"/>
</dbReference>
<dbReference type="GO" id="GO:0036125">
    <property type="term" value="C:fatty acid beta-oxidation multienzyme complex"/>
    <property type="evidence" value="ECO:0007669"/>
    <property type="project" value="InterPro"/>
</dbReference>
<dbReference type="GO" id="GO:0008692">
    <property type="term" value="F:3-hydroxybutyryl-CoA epimerase activity"/>
    <property type="evidence" value="ECO:0007669"/>
    <property type="project" value="UniProtKB-UniRule"/>
</dbReference>
<dbReference type="GO" id="GO:0004165">
    <property type="term" value="F:delta(3)-delta(2)-enoyl-CoA isomerase activity"/>
    <property type="evidence" value="ECO:0007669"/>
    <property type="project" value="UniProtKB-UniRule"/>
</dbReference>
<dbReference type="GO" id="GO:0004300">
    <property type="term" value="F:enoyl-CoA hydratase activity"/>
    <property type="evidence" value="ECO:0007669"/>
    <property type="project" value="UniProtKB-UniRule"/>
</dbReference>
<dbReference type="GO" id="GO:0016509">
    <property type="term" value="F:long-chain-3-hydroxyacyl-CoA dehydrogenase activity"/>
    <property type="evidence" value="ECO:0007669"/>
    <property type="project" value="TreeGrafter"/>
</dbReference>
<dbReference type="GO" id="GO:0070403">
    <property type="term" value="F:NAD+ binding"/>
    <property type="evidence" value="ECO:0007669"/>
    <property type="project" value="InterPro"/>
</dbReference>
<dbReference type="GO" id="GO:0006635">
    <property type="term" value="P:fatty acid beta-oxidation"/>
    <property type="evidence" value="ECO:0007669"/>
    <property type="project" value="UniProtKB-UniRule"/>
</dbReference>
<dbReference type="CDD" id="cd06558">
    <property type="entry name" value="crotonase-like"/>
    <property type="match status" value="1"/>
</dbReference>
<dbReference type="FunFam" id="1.10.1040.50:FF:000001">
    <property type="entry name" value="Fatty acid oxidation complex subunit alpha"/>
    <property type="match status" value="1"/>
</dbReference>
<dbReference type="FunFam" id="3.90.226.10:FF:000018">
    <property type="entry name" value="Fatty acid oxidation complex subunit alpha"/>
    <property type="match status" value="1"/>
</dbReference>
<dbReference type="FunFam" id="3.40.50.720:FF:000009">
    <property type="entry name" value="Fatty oxidation complex, alpha subunit"/>
    <property type="match status" value="1"/>
</dbReference>
<dbReference type="Gene3D" id="1.10.1040.50">
    <property type="match status" value="1"/>
</dbReference>
<dbReference type="Gene3D" id="3.90.226.10">
    <property type="entry name" value="2-enoyl-CoA Hydratase, Chain A, domain 1"/>
    <property type="match status" value="1"/>
</dbReference>
<dbReference type="Gene3D" id="3.40.50.720">
    <property type="entry name" value="NAD(P)-binding Rossmann-like Domain"/>
    <property type="match status" value="1"/>
</dbReference>
<dbReference type="HAMAP" id="MF_01621">
    <property type="entry name" value="FadB"/>
    <property type="match status" value="1"/>
</dbReference>
<dbReference type="InterPro" id="IPR006180">
    <property type="entry name" value="3-OHacyl-CoA_DH_CS"/>
</dbReference>
<dbReference type="InterPro" id="IPR006176">
    <property type="entry name" value="3-OHacyl-CoA_DH_NAD-bd"/>
</dbReference>
<dbReference type="InterPro" id="IPR006108">
    <property type="entry name" value="3HC_DH_C"/>
</dbReference>
<dbReference type="InterPro" id="IPR008927">
    <property type="entry name" value="6-PGluconate_DH-like_C_sf"/>
</dbReference>
<dbReference type="InterPro" id="IPR029045">
    <property type="entry name" value="ClpP/crotonase-like_dom_sf"/>
</dbReference>
<dbReference type="InterPro" id="IPR018376">
    <property type="entry name" value="Enoyl-CoA_hyd/isom_CS"/>
</dbReference>
<dbReference type="InterPro" id="IPR001753">
    <property type="entry name" value="Enoyl-CoA_hydra/iso"/>
</dbReference>
<dbReference type="InterPro" id="IPR050136">
    <property type="entry name" value="FA_oxidation_alpha_subunit"/>
</dbReference>
<dbReference type="InterPro" id="IPR012799">
    <property type="entry name" value="FadB"/>
</dbReference>
<dbReference type="InterPro" id="IPR036291">
    <property type="entry name" value="NAD(P)-bd_dom_sf"/>
</dbReference>
<dbReference type="NCBIfam" id="TIGR02437">
    <property type="entry name" value="FadB"/>
    <property type="match status" value="1"/>
</dbReference>
<dbReference type="NCBIfam" id="NF008727">
    <property type="entry name" value="PRK11730.1"/>
    <property type="match status" value="1"/>
</dbReference>
<dbReference type="PANTHER" id="PTHR43612">
    <property type="entry name" value="TRIFUNCTIONAL ENZYME SUBUNIT ALPHA"/>
    <property type="match status" value="1"/>
</dbReference>
<dbReference type="PANTHER" id="PTHR43612:SF3">
    <property type="entry name" value="TRIFUNCTIONAL ENZYME SUBUNIT ALPHA, MITOCHONDRIAL"/>
    <property type="match status" value="1"/>
</dbReference>
<dbReference type="Pfam" id="PF00725">
    <property type="entry name" value="3HCDH"/>
    <property type="match status" value="2"/>
</dbReference>
<dbReference type="Pfam" id="PF02737">
    <property type="entry name" value="3HCDH_N"/>
    <property type="match status" value="1"/>
</dbReference>
<dbReference type="Pfam" id="PF00378">
    <property type="entry name" value="ECH_1"/>
    <property type="match status" value="1"/>
</dbReference>
<dbReference type="SUPFAM" id="SSF48179">
    <property type="entry name" value="6-phosphogluconate dehydrogenase C-terminal domain-like"/>
    <property type="match status" value="2"/>
</dbReference>
<dbReference type="SUPFAM" id="SSF52096">
    <property type="entry name" value="ClpP/crotonase"/>
    <property type="match status" value="1"/>
</dbReference>
<dbReference type="SUPFAM" id="SSF51735">
    <property type="entry name" value="NAD(P)-binding Rossmann-fold domains"/>
    <property type="match status" value="1"/>
</dbReference>
<dbReference type="PROSITE" id="PS00067">
    <property type="entry name" value="3HCDH"/>
    <property type="match status" value="1"/>
</dbReference>
<dbReference type="PROSITE" id="PS00166">
    <property type="entry name" value="ENOYL_COA_HYDRATASE"/>
    <property type="match status" value="1"/>
</dbReference>
<organism>
    <name type="scientific">Salmonella typhi</name>
    <dbReference type="NCBI Taxonomy" id="90370"/>
    <lineage>
        <taxon>Bacteria</taxon>
        <taxon>Pseudomonadati</taxon>
        <taxon>Pseudomonadota</taxon>
        <taxon>Gammaproteobacteria</taxon>
        <taxon>Enterobacterales</taxon>
        <taxon>Enterobacteriaceae</taxon>
        <taxon>Salmonella</taxon>
    </lineage>
</organism>
<name>FADB_SALTI</name>
<reference key="1">
    <citation type="journal article" date="2001" name="Nature">
        <title>Complete genome sequence of a multiple drug resistant Salmonella enterica serovar Typhi CT18.</title>
        <authorList>
            <person name="Parkhill J."/>
            <person name="Dougan G."/>
            <person name="James K.D."/>
            <person name="Thomson N.R."/>
            <person name="Pickard D."/>
            <person name="Wain J."/>
            <person name="Churcher C.M."/>
            <person name="Mungall K.L."/>
            <person name="Bentley S.D."/>
            <person name="Holden M.T.G."/>
            <person name="Sebaihia M."/>
            <person name="Baker S."/>
            <person name="Basham D."/>
            <person name="Brooks K."/>
            <person name="Chillingworth T."/>
            <person name="Connerton P."/>
            <person name="Cronin A."/>
            <person name="Davis P."/>
            <person name="Davies R.M."/>
            <person name="Dowd L."/>
            <person name="White N."/>
            <person name="Farrar J."/>
            <person name="Feltwell T."/>
            <person name="Hamlin N."/>
            <person name="Haque A."/>
            <person name="Hien T.T."/>
            <person name="Holroyd S."/>
            <person name="Jagels K."/>
            <person name="Krogh A."/>
            <person name="Larsen T.S."/>
            <person name="Leather S."/>
            <person name="Moule S."/>
            <person name="O'Gaora P."/>
            <person name="Parry C."/>
            <person name="Quail M.A."/>
            <person name="Rutherford K.M."/>
            <person name="Simmonds M."/>
            <person name="Skelton J."/>
            <person name="Stevens K."/>
            <person name="Whitehead S."/>
            <person name="Barrell B.G."/>
        </authorList>
    </citation>
    <scope>NUCLEOTIDE SEQUENCE [LARGE SCALE GENOMIC DNA]</scope>
    <source>
        <strain>CT18</strain>
    </source>
</reference>
<reference key="2">
    <citation type="journal article" date="2003" name="J. Bacteriol.">
        <title>Comparative genomics of Salmonella enterica serovar Typhi strains Ty2 and CT18.</title>
        <authorList>
            <person name="Deng W."/>
            <person name="Liou S.-R."/>
            <person name="Plunkett G. III"/>
            <person name="Mayhew G.F."/>
            <person name="Rose D.J."/>
            <person name="Burland V."/>
            <person name="Kodoyianni V."/>
            <person name="Schwartz D.C."/>
            <person name="Blattner F.R."/>
        </authorList>
    </citation>
    <scope>NUCLEOTIDE SEQUENCE [LARGE SCALE GENOMIC DNA]</scope>
    <source>
        <strain>ATCC 700931 / Ty2</strain>
    </source>
</reference>
<keyword id="KW-0276">Fatty acid metabolism</keyword>
<keyword id="KW-0413">Isomerase</keyword>
<keyword id="KW-0442">Lipid degradation</keyword>
<keyword id="KW-0443">Lipid metabolism</keyword>
<keyword id="KW-0456">Lyase</keyword>
<keyword id="KW-0511">Multifunctional enzyme</keyword>
<keyword id="KW-0520">NAD</keyword>
<keyword id="KW-0560">Oxidoreductase</keyword>
<gene>
    <name evidence="1" type="primary">fadB</name>
    <name type="ordered locus">STY3577</name>
    <name type="ordered locus">t3315</name>
</gene>
<evidence type="ECO:0000255" key="1">
    <source>
        <dbReference type="HAMAP-Rule" id="MF_01621"/>
    </source>
</evidence>
<evidence type="ECO:0000256" key="2">
    <source>
        <dbReference type="SAM" id="MobiDB-lite"/>
    </source>
</evidence>
<protein>
    <recommendedName>
        <fullName evidence="1">Fatty acid oxidation complex subunit alpha</fullName>
    </recommendedName>
    <domain>
        <recommendedName>
            <fullName evidence="1">Enoyl-CoA hydratase/Delta(3)-cis-Delta(2)-trans-enoyl-CoA isomerase/3-hydroxybutyryl-CoA epimerase</fullName>
            <ecNumber evidence="1">4.2.1.17</ecNumber>
            <ecNumber evidence="1">5.1.2.3</ecNumber>
            <ecNumber evidence="1">5.3.3.8</ecNumber>
        </recommendedName>
    </domain>
    <domain>
        <recommendedName>
            <fullName evidence="1">3-hydroxyacyl-CoA dehydrogenase</fullName>
            <ecNumber evidence="1">1.1.1.35</ecNumber>
        </recommendedName>
    </domain>
</protein>
<sequence length="729" mass="79642">MLYKGDTLYLDWLEDGIAELVFDAPGSVNKLDTATVASLGQALEVLEKQHDLKGLLLRSNKAAFIVGADITEFLSLFLVPEEQLSQWLHFANSVFNRLEDLPVPTLAAVNGYALGGGCECVLATDYRLATPDLRIGLPETKLGIMPGFGGSVRLPRMLGADSALEIIAAGKDVGAEHALKIGLVDGVVKQEKLIEGAIAVLRQAITGDLDWRAKRQPKLEPLKLSKIEAAMSFTIAKGMVAQTAGKHYPAPMTAVKTIEAAARFGREEALNLENKSFVPLAHTNEARALVGIFLNDQYVKGKAKKLTKDIETPKQAAVLGAGIMGGGIAYQSAWKGVPVIMKDINDKSLNLGMTEAAKLLNKQLERGKIDGLKLAGVISTIHPTLDYAGFDRVDVVVEAVVENPKVKKAVLAETEQKVRPETVLASNTSTIPIGELASALERPENFCGMHFFNPVHRMPLVEIIRGEKSSDETIAKVVAWASKMGKTPIVVNNCPGFFVNRVLFPYFAGFSQLLRDGADFRKVDKVMEKQFGWPMGPAYLLDVVGIDTAHHAQAVMAAGFPQRMQKEYRDAIDALFDASRFGQKNGLGFWRYKEDSKGKPKKEEDAAVDDLLASVSQTKRDFSDDEIIARMMIPMINEVVRCLEEGIIASPAEADMALVYGLGFPPFHGGAFRWLDTQGSAKYLDMAQQYQHLGPLYEVPEGLRDKTRHNEPYYPPVEPARPVGSLKTA</sequence>
<comment type="function">
    <text evidence="1">Involved in the aerobic and anaerobic degradation of long-chain fatty acids via beta-oxidation cycle. Catalyzes the formation of 3-oxoacyl-CoA from enoyl-CoA via L-3-hydroxyacyl-CoA. It can also use D-3-hydroxyacyl-CoA and cis-3-enoyl-CoA as substrate.</text>
</comment>
<comment type="catalytic activity">
    <reaction evidence="1">
        <text>a (3S)-3-hydroxyacyl-CoA + NAD(+) = a 3-oxoacyl-CoA + NADH + H(+)</text>
        <dbReference type="Rhea" id="RHEA:22432"/>
        <dbReference type="ChEBI" id="CHEBI:15378"/>
        <dbReference type="ChEBI" id="CHEBI:57318"/>
        <dbReference type="ChEBI" id="CHEBI:57540"/>
        <dbReference type="ChEBI" id="CHEBI:57945"/>
        <dbReference type="ChEBI" id="CHEBI:90726"/>
        <dbReference type="EC" id="1.1.1.35"/>
    </reaction>
</comment>
<comment type="catalytic activity">
    <reaction evidence="1">
        <text>a (3S)-3-hydroxyacyl-CoA = a (2E)-enoyl-CoA + H2O</text>
        <dbReference type="Rhea" id="RHEA:16105"/>
        <dbReference type="ChEBI" id="CHEBI:15377"/>
        <dbReference type="ChEBI" id="CHEBI:57318"/>
        <dbReference type="ChEBI" id="CHEBI:58856"/>
        <dbReference type="EC" id="4.2.1.17"/>
    </reaction>
</comment>
<comment type="catalytic activity">
    <reaction evidence="1">
        <text>a 4-saturated-(3S)-3-hydroxyacyl-CoA = a (3E)-enoyl-CoA + H2O</text>
        <dbReference type="Rhea" id="RHEA:20724"/>
        <dbReference type="ChEBI" id="CHEBI:15377"/>
        <dbReference type="ChEBI" id="CHEBI:58521"/>
        <dbReference type="ChEBI" id="CHEBI:137480"/>
        <dbReference type="EC" id="4.2.1.17"/>
    </reaction>
</comment>
<comment type="catalytic activity">
    <reaction evidence="1">
        <text>(3S)-3-hydroxybutanoyl-CoA = (3R)-3-hydroxybutanoyl-CoA</text>
        <dbReference type="Rhea" id="RHEA:21760"/>
        <dbReference type="ChEBI" id="CHEBI:57315"/>
        <dbReference type="ChEBI" id="CHEBI:57316"/>
        <dbReference type="EC" id="5.1.2.3"/>
    </reaction>
</comment>
<comment type="catalytic activity">
    <reaction evidence="1">
        <text>a (3Z)-enoyl-CoA = a 4-saturated (2E)-enoyl-CoA</text>
        <dbReference type="Rhea" id="RHEA:45900"/>
        <dbReference type="ChEBI" id="CHEBI:85097"/>
        <dbReference type="ChEBI" id="CHEBI:85489"/>
        <dbReference type="EC" id="5.3.3.8"/>
    </reaction>
</comment>
<comment type="catalytic activity">
    <reaction evidence="1">
        <text>a (3E)-enoyl-CoA = a 4-saturated (2E)-enoyl-CoA</text>
        <dbReference type="Rhea" id="RHEA:45228"/>
        <dbReference type="ChEBI" id="CHEBI:58521"/>
        <dbReference type="ChEBI" id="CHEBI:85097"/>
        <dbReference type="EC" id="5.3.3.8"/>
    </reaction>
</comment>
<comment type="pathway">
    <text evidence="1">Lipid metabolism; fatty acid beta-oxidation.</text>
</comment>
<comment type="subunit">
    <text evidence="1">Heterotetramer of two alpha chains (FadB) and two beta chains (FadA).</text>
</comment>
<comment type="similarity">
    <text evidence="1">In the N-terminal section; belongs to the enoyl-CoA hydratase/isomerase family.</text>
</comment>
<comment type="similarity">
    <text evidence="1">In the C-terminal section; belongs to the 3-hydroxyacyl-CoA dehydrogenase family.</text>
</comment>